<protein>
    <recommendedName>
        <fullName evidence="1">Adenosylcobinamide-GDP ribazoletransferase</fullName>
        <ecNumber evidence="1">2.7.8.26</ecNumber>
    </recommendedName>
    <alternativeName>
        <fullName evidence="1">Cobalamin synthase</fullName>
    </alternativeName>
    <alternativeName>
        <fullName evidence="1">Cobalamin-5'-phosphate synthase</fullName>
    </alternativeName>
</protein>
<evidence type="ECO:0000255" key="1">
    <source>
        <dbReference type="HAMAP-Rule" id="MF_00719"/>
    </source>
</evidence>
<organism>
    <name type="scientific">Rhizobium meliloti (strain 1021)</name>
    <name type="common">Ensifer meliloti</name>
    <name type="synonym">Sinorhizobium meliloti</name>
    <dbReference type="NCBI Taxonomy" id="266834"/>
    <lineage>
        <taxon>Bacteria</taxon>
        <taxon>Pseudomonadati</taxon>
        <taxon>Pseudomonadota</taxon>
        <taxon>Alphaproteobacteria</taxon>
        <taxon>Hyphomicrobiales</taxon>
        <taxon>Rhizobiaceae</taxon>
        <taxon>Sinorhizobium/Ensifer group</taxon>
        <taxon>Sinorhizobium</taxon>
    </lineage>
</organism>
<sequence length="262" mass="26782">MADIRELWDDVARSVAFLSRIPVPDRYFHGYDGGLGRAVRAFPLAAILITLPAAAIAFILGALHASSLFSAFLVVAVQAMVTGALHEDGLGDTADGFGGGRDRESALEIMKDSRIGTYGAVALILSFGLRVSALAAFLPLLTPTGGGIALLATAALSRAAMVWHWSRLPPARRGGVAASAGIPEPGATSVALGSGVLLALVLFFLAGIPTVAVWLSFAAFGLAVPGFTRIASRKLGGHTGDTIGATQQLTEVAVLGALALAI</sequence>
<gene>
    <name evidence="1" type="primary">cobS</name>
    <name type="synonym">cobV</name>
    <name type="ordered locus">R01885</name>
    <name type="ORF">SMc04215</name>
</gene>
<reference key="1">
    <citation type="journal article" date="2001" name="Proc. Natl. Acad. Sci. U.S.A.">
        <title>Analysis of the chromosome sequence of the legume symbiont Sinorhizobium meliloti strain 1021.</title>
        <authorList>
            <person name="Capela D."/>
            <person name="Barloy-Hubler F."/>
            <person name="Gouzy J."/>
            <person name="Bothe G."/>
            <person name="Ampe F."/>
            <person name="Batut J."/>
            <person name="Boistard P."/>
            <person name="Becker A."/>
            <person name="Boutry M."/>
            <person name="Cadieu E."/>
            <person name="Dreano S."/>
            <person name="Gloux S."/>
            <person name="Godrie T."/>
            <person name="Goffeau A."/>
            <person name="Kahn D."/>
            <person name="Kiss E."/>
            <person name="Lelaure V."/>
            <person name="Masuy D."/>
            <person name="Pohl T."/>
            <person name="Portetelle D."/>
            <person name="Puehler A."/>
            <person name="Purnelle B."/>
            <person name="Ramsperger U."/>
            <person name="Renard C."/>
            <person name="Thebault P."/>
            <person name="Vandenbol M."/>
            <person name="Weidner S."/>
            <person name="Galibert F."/>
        </authorList>
    </citation>
    <scope>NUCLEOTIDE SEQUENCE [LARGE SCALE GENOMIC DNA]</scope>
    <source>
        <strain>1021</strain>
    </source>
</reference>
<reference key="2">
    <citation type="journal article" date="2001" name="Science">
        <title>The composite genome of the legume symbiont Sinorhizobium meliloti.</title>
        <authorList>
            <person name="Galibert F."/>
            <person name="Finan T.M."/>
            <person name="Long S.R."/>
            <person name="Puehler A."/>
            <person name="Abola P."/>
            <person name="Ampe F."/>
            <person name="Barloy-Hubler F."/>
            <person name="Barnett M.J."/>
            <person name="Becker A."/>
            <person name="Boistard P."/>
            <person name="Bothe G."/>
            <person name="Boutry M."/>
            <person name="Bowser L."/>
            <person name="Buhrmester J."/>
            <person name="Cadieu E."/>
            <person name="Capela D."/>
            <person name="Chain P."/>
            <person name="Cowie A."/>
            <person name="Davis R.W."/>
            <person name="Dreano S."/>
            <person name="Federspiel N.A."/>
            <person name="Fisher R.F."/>
            <person name="Gloux S."/>
            <person name="Godrie T."/>
            <person name="Goffeau A."/>
            <person name="Golding B."/>
            <person name="Gouzy J."/>
            <person name="Gurjal M."/>
            <person name="Hernandez-Lucas I."/>
            <person name="Hong A."/>
            <person name="Huizar L."/>
            <person name="Hyman R.W."/>
            <person name="Jones T."/>
            <person name="Kahn D."/>
            <person name="Kahn M.L."/>
            <person name="Kalman S."/>
            <person name="Keating D.H."/>
            <person name="Kiss E."/>
            <person name="Komp C."/>
            <person name="Lelaure V."/>
            <person name="Masuy D."/>
            <person name="Palm C."/>
            <person name="Peck M.C."/>
            <person name="Pohl T.M."/>
            <person name="Portetelle D."/>
            <person name="Purnelle B."/>
            <person name="Ramsperger U."/>
            <person name="Surzycki R."/>
            <person name="Thebault P."/>
            <person name="Vandenbol M."/>
            <person name="Vorhoelter F.J."/>
            <person name="Weidner S."/>
            <person name="Wells D.H."/>
            <person name="Wong K."/>
            <person name="Yeh K.-C."/>
            <person name="Batut J."/>
        </authorList>
    </citation>
    <scope>NUCLEOTIDE SEQUENCE [LARGE SCALE GENOMIC DNA]</scope>
    <source>
        <strain>1021</strain>
    </source>
</reference>
<keyword id="KW-0997">Cell inner membrane</keyword>
<keyword id="KW-1003">Cell membrane</keyword>
<keyword id="KW-0169">Cobalamin biosynthesis</keyword>
<keyword id="KW-0460">Magnesium</keyword>
<keyword id="KW-0472">Membrane</keyword>
<keyword id="KW-1185">Reference proteome</keyword>
<keyword id="KW-0808">Transferase</keyword>
<keyword id="KW-0812">Transmembrane</keyword>
<keyword id="KW-1133">Transmembrane helix</keyword>
<feature type="chain" id="PRO_0000146893" description="Adenosylcobinamide-GDP ribazoletransferase">
    <location>
        <begin position="1"/>
        <end position="262"/>
    </location>
</feature>
<feature type="transmembrane region" description="Helical" evidence="1">
    <location>
        <begin position="41"/>
        <end position="61"/>
    </location>
</feature>
<feature type="transmembrane region" description="Helical" evidence="1">
    <location>
        <begin position="65"/>
        <end position="85"/>
    </location>
</feature>
<feature type="transmembrane region" description="Helical" evidence="1">
    <location>
        <begin position="115"/>
        <end position="132"/>
    </location>
</feature>
<feature type="transmembrane region" description="Helical" evidence="1">
    <location>
        <begin position="134"/>
        <end position="156"/>
    </location>
</feature>
<feature type="transmembrane region" description="Helical" evidence="1">
    <location>
        <begin position="195"/>
        <end position="215"/>
    </location>
</feature>
<name>COBS_RHIME</name>
<proteinExistence type="inferred from homology"/>
<comment type="function">
    <text evidence="1">Joins adenosylcobinamide-GDP and alpha-ribazole to generate adenosylcobalamin (Ado-cobalamin). Also synthesizes adenosylcobalamin 5'-phosphate from adenosylcobinamide-GDP and alpha-ribazole 5'-phosphate.</text>
</comment>
<comment type="catalytic activity">
    <reaction evidence="1">
        <text>alpha-ribazole + adenosylcob(III)inamide-GDP = adenosylcob(III)alamin + GMP + H(+)</text>
        <dbReference type="Rhea" id="RHEA:16049"/>
        <dbReference type="ChEBI" id="CHEBI:10329"/>
        <dbReference type="ChEBI" id="CHEBI:15378"/>
        <dbReference type="ChEBI" id="CHEBI:18408"/>
        <dbReference type="ChEBI" id="CHEBI:58115"/>
        <dbReference type="ChEBI" id="CHEBI:60487"/>
        <dbReference type="EC" id="2.7.8.26"/>
    </reaction>
</comment>
<comment type="catalytic activity">
    <reaction evidence="1">
        <text>alpha-ribazole 5'-phosphate + adenosylcob(III)inamide-GDP = adenosylcob(III)alamin 5'-phosphate + GMP + H(+)</text>
        <dbReference type="Rhea" id="RHEA:23560"/>
        <dbReference type="ChEBI" id="CHEBI:15378"/>
        <dbReference type="ChEBI" id="CHEBI:57918"/>
        <dbReference type="ChEBI" id="CHEBI:58115"/>
        <dbReference type="ChEBI" id="CHEBI:60487"/>
        <dbReference type="ChEBI" id="CHEBI:60493"/>
        <dbReference type="EC" id="2.7.8.26"/>
    </reaction>
</comment>
<comment type="cofactor">
    <cofactor evidence="1">
        <name>Mg(2+)</name>
        <dbReference type="ChEBI" id="CHEBI:18420"/>
    </cofactor>
</comment>
<comment type="pathway">
    <text evidence="1">Cofactor biosynthesis; adenosylcobalamin biosynthesis; adenosylcobalamin from cob(II)yrinate a,c-diamide: step 7/7.</text>
</comment>
<comment type="subcellular location">
    <subcellularLocation>
        <location evidence="1">Cell inner membrane</location>
        <topology evidence="1">Multi-pass membrane protein</topology>
    </subcellularLocation>
</comment>
<comment type="similarity">
    <text evidence="1">Belongs to the CobS family.</text>
</comment>
<accession>Q92P97</accession>
<dbReference type="EC" id="2.7.8.26" evidence="1"/>
<dbReference type="EMBL" id="AL591688">
    <property type="protein sequence ID" value="CAC46464.1"/>
    <property type="molecule type" value="Genomic_DNA"/>
</dbReference>
<dbReference type="RefSeq" id="NP_385991.1">
    <property type="nucleotide sequence ID" value="NC_003047.1"/>
</dbReference>
<dbReference type="RefSeq" id="WP_010969539.1">
    <property type="nucleotide sequence ID" value="NC_003047.1"/>
</dbReference>
<dbReference type="EnsemblBacteria" id="CAC46464">
    <property type="protein sequence ID" value="CAC46464"/>
    <property type="gene ID" value="SMc04215"/>
</dbReference>
<dbReference type="KEGG" id="sme:SMc04215"/>
<dbReference type="PATRIC" id="fig|266834.11.peg.3328"/>
<dbReference type="eggNOG" id="COG0368">
    <property type="taxonomic scope" value="Bacteria"/>
</dbReference>
<dbReference type="HOGENOM" id="CLU_057426_1_2_5"/>
<dbReference type="OrthoDB" id="9794626at2"/>
<dbReference type="UniPathway" id="UPA00148">
    <property type="reaction ID" value="UER00238"/>
</dbReference>
<dbReference type="Proteomes" id="UP000001976">
    <property type="component" value="Chromosome"/>
</dbReference>
<dbReference type="GO" id="GO:0005886">
    <property type="term" value="C:plasma membrane"/>
    <property type="evidence" value="ECO:0007669"/>
    <property type="project" value="UniProtKB-SubCell"/>
</dbReference>
<dbReference type="GO" id="GO:0051073">
    <property type="term" value="F:adenosylcobinamide-GDP ribazoletransferase activity"/>
    <property type="evidence" value="ECO:0007669"/>
    <property type="project" value="UniProtKB-UniRule"/>
</dbReference>
<dbReference type="GO" id="GO:0008818">
    <property type="term" value="F:cobalamin 5'-phosphate synthase activity"/>
    <property type="evidence" value="ECO:0007669"/>
    <property type="project" value="UniProtKB-UniRule"/>
</dbReference>
<dbReference type="GO" id="GO:0009236">
    <property type="term" value="P:cobalamin biosynthetic process"/>
    <property type="evidence" value="ECO:0007669"/>
    <property type="project" value="UniProtKB-UniRule"/>
</dbReference>
<dbReference type="HAMAP" id="MF_00719">
    <property type="entry name" value="CobS"/>
    <property type="match status" value="1"/>
</dbReference>
<dbReference type="InterPro" id="IPR003805">
    <property type="entry name" value="CobS"/>
</dbReference>
<dbReference type="NCBIfam" id="NF001276">
    <property type="entry name" value="PRK00235.1-2"/>
    <property type="match status" value="1"/>
</dbReference>
<dbReference type="PANTHER" id="PTHR34148">
    <property type="entry name" value="ADENOSYLCOBINAMIDE-GDP RIBAZOLETRANSFERASE"/>
    <property type="match status" value="1"/>
</dbReference>
<dbReference type="PANTHER" id="PTHR34148:SF1">
    <property type="entry name" value="ADENOSYLCOBINAMIDE-GDP RIBAZOLETRANSFERASE"/>
    <property type="match status" value="1"/>
</dbReference>
<dbReference type="Pfam" id="PF02654">
    <property type="entry name" value="CobS"/>
    <property type="match status" value="1"/>
</dbReference>